<accession>Q8P3X4</accession>
<comment type="function">
    <text evidence="1">Catalyzes the synthesis of 5,6-dihydrouridine (D), a modified base found in the D-loop of most tRNAs, via the reduction of the C5-C6 double bond in target uridines. Specifically modifies U20 and U20a in tRNAs.</text>
</comment>
<comment type="catalytic activity">
    <reaction evidence="1">
        <text>5,6-dihydrouridine(20) in tRNA + NADP(+) = uridine(20) in tRNA + NADPH + H(+)</text>
        <dbReference type="Rhea" id="RHEA:53336"/>
        <dbReference type="Rhea" id="RHEA-COMP:13533"/>
        <dbReference type="Rhea" id="RHEA-COMP:13534"/>
        <dbReference type="ChEBI" id="CHEBI:15378"/>
        <dbReference type="ChEBI" id="CHEBI:57783"/>
        <dbReference type="ChEBI" id="CHEBI:58349"/>
        <dbReference type="ChEBI" id="CHEBI:65315"/>
        <dbReference type="ChEBI" id="CHEBI:74443"/>
        <dbReference type="EC" id="1.3.1.91"/>
    </reaction>
</comment>
<comment type="catalytic activity">
    <reaction evidence="1">
        <text>5,6-dihydrouridine(20) in tRNA + NAD(+) = uridine(20) in tRNA + NADH + H(+)</text>
        <dbReference type="Rhea" id="RHEA:53340"/>
        <dbReference type="Rhea" id="RHEA-COMP:13533"/>
        <dbReference type="Rhea" id="RHEA-COMP:13534"/>
        <dbReference type="ChEBI" id="CHEBI:15378"/>
        <dbReference type="ChEBI" id="CHEBI:57540"/>
        <dbReference type="ChEBI" id="CHEBI:57945"/>
        <dbReference type="ChEBI" id="CHEBI:65315"/>
        <dbReference type="ChEBI" id="CHEBI:74443"/>
        <dbReference type="EC" id="1.3.1.91"/>
    </reaction>
</comment>
<comment type="catalytic activity">
    <reaction evidence="1">
        <text>5,6-dihydrouridine(20a) in tRNA + NADP(+) = uridine(20a) in tRNA + NADPH + H(+)</text>
        <dbReference type="Rhea" id="RHEA:53344"/>
        <dbReference type="Rhea" id="RHEA-COMP:13535"/>
        <dbReference type="Rhea" id="RHEA-COMP:13536"/>
        <dbReference type="ChEBI" id="CHEBI:15378"/>
        <dbReference type="ChEBI" id="CHEBI:57783"/>
        <dbReference type="ChEBI" id="CHEBI:58349"/>
        <dbReference type="ChEBI" id="CHEBI:65315"/>
        <dbReference type="ChEBI" id="CHEBI:74443"/>
    </reaction>
</comment>
<comment type="catalytic activity">
    <reaction evidence="1">
        <text>5,6-dihydrouridine(20a) in tRNA + NAD(+) = uridine(20a) in tRNA + NADH + H(+)</text>
        <dbReference type="Rhea" id="RHEA:53348"/>
        <dbReference type="Rhea" id="RHEA-COMP:13535"/>
        <dbReference type="Rhea" id="RHEA-COMP:13536"/>
        <dbReference type="ChEBI" id="CHEBI:15378"/>
        <dbReference type="ChEBI" id="CHEBI:57540"/>
        <dbReference type="ChEBI" id="CHEBI:57945"/>
        <dbReference type="ChEBI" id="CHEBI:65315"/>
        <dbReference type="ChEBI" id="CHEBI:74443"/>
    </reaction>
</comment>
<comment type="cofactor">
    <cofactor evidence="1">
        <name>FMN</name>
        <dbReference type="ChEBI" id="CHEBI:58210"/>
    </cofactor>
</comment>
<comment type="similarity">
    <text evidence="1">Belongs to the Dus family. DusA subfamily.</text>
</comment>
<sequence length="335" mass="36520">MTLPPPAAYADSLRLSVAPMMDWTDRHCRVFHRLLAPSARLYTEMVHANAVIHGDRQRLIGFDAVEHPLALQLGGSDPALLAQAAQIAQAWGYDEINLNCGCPSDRVQAGRFGACLMREPALVADCVAAMCAATALPVTVKCRLGVDDDDDYAVFAGFIDQVVGAGAAMVVVHARNAWLKGLSPKENREVPPLRYDWAYRLKQERPALPVVLNGGIASVEASLAHLQHTDGVMLGRAAYHDPYVLHQLEAALSGRPERARADLLQAYQPYVQAQLDQGLALKHMTRHILGLFHGQPGGRVFRQVLSEGAHRPGAGWELVEQASQRTDDQARRIAA</sequence>
<keyword id="KW-0285">Flavoprotein</keyword>
<keyword id="KW-0288">FMN</keyword>
<keyword id="KW-0521">NADP</keyword>
<keyword id="KW-0560">Oxidoreductase</keyword>
<keyword id="KW-1185">Reference proteome</keyword>
<keyword id="KW-0694">RNA-binding</keyword>
<keyword id="KW-0819">tRNA processing</keyword>
<keyword id="KW-0820">tRNA-binding</keyword>
<name>DUSA_XANCP</name>
<proteinExistence type="inferred from homology"/>
<organism>
    <name type="scientific">Xanthomonas campestris pv. campestris (strain ATCC 33913 / DSM 3586 / NCPPB 528 / LMG 568 / P 25)</name>
    <dbReference type="NCBI Taxonomy" id="190485"/>
    <lineage>
        <taxon>Bacteria</taxon>
        <taxon>Pseudomonadati</taxon>
        <taxon>Pseudomonadota</taxon>
        <taxon>Gammaproteobacteria</taxon>
        <taxon>Lysobacterales</taxon>
        <taxon>Lysobacteraceae</taxon>
        <taxon>Xanthomonas</taxon>
    </lineage>
</organism>
<protein>
    <recommendedName>
        <fullName evidence="1">tRNA-dihydrouridine(20/20a) synthase</fullName>
        <ecNumber evidence="1">1.3.1.-</ecNumber>
        <ecNumber evidence="1">1.3.1.91</ecNumber>
    </recommendedName>
    <alternativeName>
        <fullName evidence="1">U20-specific dihydrouridine synthase</fullName>
        <shortName evidence="1">U20-specific Dus</shortName>
    </alternativeName>
    <alternativeName>
        <fullName evidence="1">tRNA-dihydrouridine synthase A</fullName>
    </alternativeName>
</protein>
<gene>
    <name evidence="1" type="primary">dusA</name>
    <name type="ordered locus">XCC3945</name>
</gene>
<dbReference type="EC" id="1.3.1.-" evidence="1"/>
<dbReference type="EC" id="1.3.1.91" evidence="1"/>
<dbReference type="EMBL" id="AE008922">
    <property type="protein sequence ID" value="AAM43166.1"/>
    <property type="molecule type" value="Genomic_DNA"/>
</dbReference>
<dbReference type="RefSeq" id="NP_639284.1">
    <property type="nucleotide sequence ID" value="NC_003902.1"/>
</dbReference>
<dbReference type="RefSeq" id="WP_011039017.1">
    <property type="nucleotide sequence ID" value="NC_003902.1"/>
</dbReference>
<dbReference type="SMR" id="Q8P3X4"/>
<dbReference type="STRING" id="190485.XCC3945"/>
<dbReference type="EnsemblBacteria" id="AAM43166">
    <property type="protein sequence ID" value="AAM43166"/>
    <property type="gene ID" value="XCC3945"/>
</dbReference>
<dbReference type="KEGG" id="xcc:XCC3945"/>
<dbReference type="PATRIC" id="fig|190485.4.peg.4221"/>
<dbReference type="eggNOG" id="COG0042">
    <property type="taxonomic scope" value="Bacteria"/>
</dbReference>
<dbReference type="HOGENOM" id="CLU_013299_2_1_6"/>
<dbReference type="OrthoDB" id="9783413at2"/>
<dbReference type="Proteomes" id="UP000001010">
    <property type="component" value="Chromosome"/>
</dbReference>
<dbReference type="GO" id="GO:0050660">
    <property type="term" value="F:flavin adenine dinucleotide binding"/>
    <property type="evidence" value="ECO:0007669"/>
    <property type="project" value="InterPro"/>
</dbReference>
<dbReference type="GO" id="GO:0010181">
    <property type="term" value="F:FMN binding"/>
    <property type="evidence" value="ECO:0007669"/>
    <property type="project" value="UniProtKB-UniRule"/>
</dbReference>
<dbReference type="GO" id="GO:0000049">
    <property type="term" value="F:tRNA binding"/>
    <property type="evidence" value="ECO:0007669"/>
    <property type="project" value="UniProtKB-UniRule"/>
</dbReference>
<dbReference type="GO" id="GO:0102264">
    <property type="term" value="F:tRNA-dihydrouridine20 synthase activity"/>
    <property type="evidence" value="ECO:0007669"/>
    <property type="project" value="UniProtKB-EC"/>
</dbReference>
<dbReference type="GO" id="GO:0102266">
    <property type="term" value="F:tRNA-dihydrouridine20a synthase activity"/>
    <property type="evidence" value="ECO:0007669"/>
    <property type="project" value="RHEA"/>
</dbReference>
<dbReference type="CDD" id="cd02801">
    <property type="entry name" value="DUS_like_FMN"/>
    <property type="match status" value="1"/>
</dbReference>
<dbReference type="Gene3D" id="1.20.120.1460">
    <property type="match status" value="1"/>
</dbReference>
<dbReference type="Gene3D" id="3.20.20.70">
    <property type="entry name" value="Aldolase class I"/>
    <property type="match status" value="1"/>
</dbReference>
<dbReference type="HAMAP" id="MF_02041">
    <property type="entry name" value="DusA_subfam"/>
    <property type="match status" value="1"/>
</dbReference>
<dbReference type="InterPro" id="IPR013785">
    <property type="entry name" value="Aldolase_TIM"/>
</dbReference>
<dbReference type="InterPro" id="IPR035587">
    <property type="entry name" value="DUS-like_FMN-bd"/>
</dbReference>
<dbReference type="InterPro" id="IPR001269">
    <property type="entry name" value="DUS_fam"/>
</dbReference>
<dbReference type="InterPro" id="IPR004653">
    <property type="entry name" value="DusA"/>
</dbReference>
<dbReference type="InterPro" id="IPR018517">
    <property type="entry name" value="tRNA_hU_synthase_CS"/>
</dbReference>
<dbReference type="NCBIfam" id="NF008774">
    <property type="entry name" value="PRK11815.1"/>
    <property type="match status" value="1"/>
</dbReference>
<dbReference type="NCBIfam" id="TIGR00742">
    <property type="entry name" value="yjbN"/>
    <property type="match status" value="1"/>
</dbReference>
<dbReference type="PANTHER" id="PTHR42907">
    <property type="entry name" value="FMN-LINKED OXIDOREDUCTASES SUPERFAMILY PROTEIN"/>
    <property type="match status" value="1"/>
</dbReference>
<dbReference type="PANTHER" id="PTHR42907:SF1">
    <property type="entry name" value="FMN-LINKED OXIDOREDUCTASES SUPERFAMILY PROTEIN"/>
    <property type="match status" value="1"/>
</dbReference>
<dbReference type="Pfam" id="PF01207">
    <property type="entry name" value="Dus"/>
    <property type="match status" value="1"/>
</dbReference>
<dbReference type="PIRSF" id="PIRSF006621">
    <property type="entry name" value="Dus"/>
    <property type="match status" value="1"/>
</dbReference>
<dbReference type="SUPFAM" id="SSF51395">
    <property type="entry name" value="FMN-linked oxidoreductases"/>
    <property type="match status" value="1"/>
</dbReference>
<dbReference type="PROSITE" id="PS01136">
    <property type="entry name" value="UPF0034"/>
    <property type="match status" value="1"/>
</dbReference>
<evidence type="ECO:0000255" key="1">
    <source>
        <dbReference type="HAMAP-Rule" id="MF_02041"/>
    </source>
</evidence>
<feature type="chain" id="PRO_0000162080" description="tRNA-dihydrouridine(20/20a) synthase">
    <location>
        <begin position="1"/>
        <end position="335"/>
    </location>
</feature>
<feature type="active site" description="Proton donor" evidence="1">
    <location>
        <position position="102"/>
    </location>
</feature>
<feature type="binding site" evidence="1">
    <location>
        <begin position="19"/>
        <end position="21"/>
    </location>
    <ligand>
        <name>FMN</name>
        <dbReference type="ChEBI" id="CHEBI:58210"/>
    </ligand>
</feature>
<feature type="binding site" evidence="1">
    <location>
        <position position="72"/>
    </location>
    <ligand>
        <name>FMN</name>
        <dbReference type="ChEBI" id="CHEBI:58210"/>
    </ligand>
</feature>
<feature type="binding site" evidence="1">
    <location>
        <position position="141"/>
    </location>
    <ligand>
        <name>FMN</name>
        <dbReference type="ChEBI" id="CHEBI:58210"/>
    </ligand>
</feature>
<feature type="binding site" evidence="1">
    <location>
        <position position="173"/>
    </location>
    <ligand>
        <name>FMN</name>
        <dbReference type="ChEBI" id="CHEBI:58210"/>
    </ligand>
</feature>
<feature type="binding site" evidence="1">
    <location>
        <begin position="213"/>
        <end position="215"/>
    </location>
    <ligand>
        <name>FMN</name>
        <dbReference type="ChEBI" id="CHEBI:58210"/>
    </ligand>
</feature>
<feature type="binding site" evidence="1">
    <location>
        <begin position="235"/>
        <end position="236"/>
    </location>
    <ligand>
        <name>FMN</name>
        <dbReference type="ChEBI" id="CHEBI:58210"/>
    </ligand>
</feature>
<feature type="site" description="Interacts with tRNA" evidence="1">
    <location>
        <position position="99"/>
    </location>
</feature>
<feature type="site" description="Interacts with tRNA; defines subfamily-specific binding signature" evidence="1">
    <location>
        <position position="185"/>
    </location>
</feature>
<feature type="site" description="Interacts with tRNA" evidence="1">
    <location>
        <position position="188"/>
    </location>
</feature>
<feature type="site" description="Interacts with tRNA; defines subfamily-specific binding signature" evidence="1">
    <location>
        <position position="299"/>
    </location>
</feature>
<feature type="site" description="Interacts with tRNA; defines subfamily-specific binding signature" evidence="1">
    <location>
        <position position="302"/>
    </location>
</feature>
<reference key="1">
    <citation type="journal article" date="2002" name="Nature">
        <title>Comparison of the genomes of two Xanthomonas pathogens with differing host specificities.</title>
        <authorList>
            <person name="da Silva A.C.R."/>
            <person name="Ferro J.A."/>
            <person name="Reinach F.C."/>
            <person name="Farah C.S."/>
            <person name="Furlan L.R."/>
            <person name="Quaggio R.B."/>
            <person name="Monteiro-Vitorello C.B."/>
            <person name="Van Sluys M.A."/>
            <person name="Almeida N.F. Jr."/>
            <person name="Alves L.M.C."/>
            <person name="do Amaral A.M."/>
            <person name="Bertolini M.C."/>
            <person name="Camargo L.E.A."/>
            <person name="Camarotte G."/>
            <person name="Cannavan F."/>
            <person name="Cardozo J."/>
            <person name="Chambergo F."/>
            <person name="Ciapina L.P."/>
            <person name="Cicarelli R.M.B."/>
            <person name="Coutinho L.L."/>
            <person name="Cursino-Santos J.R."/>
            <person name="El-Dorry H."/>
            <person name="Faria J.B."/>
            <person name="Ferreira A.J.S."/>
            <person name="Ferreira R.C.C."/>
            <person name="Ferro M.I.T."/>
            <person name="Formighieri E.F."/>
            <person name="Franco M.C."/>
            <person name="Greggio C.C."/>
            <person name="Gruber A."/>
            <person name="Katsuyama A.M."/>
            <person name="Kishi L.T."/>
            <person name="Leite R.P."/>
            <person name="Lemos E.G.M."/>
            <person name="Lemos M.V.F."/>
            <person name="Locali E.C."/>
            <person name="Machado M.A."/>
            <person name="Madeira A.M.B.N."/>
            <person name="Martinez-Rossi N.M."/>
            <person name="Martins E.C."/>
            <person name="Meidanis J."/>
            <person name="Menck C.F.M."/>
            <person name="Miyaki C.Y."/>
            <person name="Moon D.H."/>
            <person name="Moreira L.M."/>
            <person name="Novo M.T.M."/>
            <person name="Okura V.K."/>
            <person name="Oliveira M.C."/>
            <person name="Oliveira V.R."/>
            <person name="Pereira H.A."/>
            <person name="Rossi A."/>
            <person name="Sena J.A.D."/>
            <person name="Silva C."/>
            <person name="de Souza R.F."/>
            <person name="Spinola L.A.F."/>
            <person name="Takita M.A."/>
            <person name="Tamura R.E."/>
            <person name="Teixeira E.C."/>
            <person name="Tezza R.I.D."/>
            <person name="Trindade dos Santos M."/>
            <person name="Truffi D."/>
            <person name="Tsai S.M."/>
            <person name="White F.F."/>
            <person name="Setubal J.C."/>
            <person name="Kitajima J.P."/>
        </authorList>
    </citation>
    <scope>NUCLEOTIDE SEQUENCE [LARGE SCALE GENOMIC DNA]</scope>
    <source>
        <strain>ATCC 33913 / DSM 3586 / NCPPB 528 / LMG 568 / P 25</strain>
    </source>
</reference>